<dbReference type="EC" id="4.2.1.11" evidence="1"/>
<dbReference type="EMBL" id="AP009049">
    <property type="protein sequence ID" value="BAH08036.1"/>
    <property type="molecule type" value="Genomic_DNA"/>
</dbReference>
<dbReference type="RefSeq" id="WP_012103711.1">
    <property type="nucleotide sequence ID" value="NC_011837.1"/>
</dbReference>
<dbReference type="SMR" id="B9E6B1"/>
<dbReference type="KEGG" id="ckr:CKR_2985"/>
<dbReference type="HOGENOM" id="CLU_031223_2_1_9"/>
<dbReference type="UniPathway" id="UPA00109">
    <property type="reaction ID" value="UER00187"/>
</dbReference>
<dbReference type="Proteomes" id="UP000007969">
    <property type="component" value="Chromosome"/>
</dbReference>
<dbReference type="GO" id="GO:0009986">
    <property type="term" value="C:cell surface"/>
    <property type="evidence" value="ECO:0007669"/>
    <property type="project" value="UniProtKB-SubCell"/>
</dbReference>
<dbReference type="GO" id="GO:0005576">
    <property type="term" value="C:extracellular region"/>
    <property type="evidence" value="ECO:0007669"/>
    <property type="project" value="UniProtKB-SubCell"/>
</dbReference>
<dbReference type="GO" id="GO:0000015">
    <property type="term" value="C:phosphopyruvate hydratase complex"/>
    <property type="evidence" value="ECO:0007669"/>
    <property type="project" value="InterPro"/>
</dbReference>
<dbReference type="GO" id="GO:0000287">
    <property type="term" value="F:magnesium ion binding"/>
    <property type="evidence" value="ECO:0007669"/>
    <property type="project" value="UniProtKB-UniRule"/>
</dbReference>
<dbReference type="GO" id="GO:0004634">
    <property type="term" value="F:phosphopyruvate hydratase activity"/>
    <property type="evidence" value="ECO:0007669"/>
    <property type="project" value="UniProtKB-UniRule"/>
</dbReference>
<dbReference type="GO" id="GO:0006096">
    <property type="term" value="P:glycolytic process"/>
    <property type="evidence" value="ECO:0007669"/>
    <property type="project" value="UniProtKB-UniRule"/>
</dbReference>
<dbReference type="CDD" id="cd03313">
    <property type="entry name" value="enolase"/>
    <property type="match status" value="1"/>
</dbReference>
<dbReference type="FunFam" id="3.20.20.120:FF:000001">
    <property type="entry name" value="Enolase"/>
    <property type="match status" value="1"/>
</dbReference>
<dbReference type="FunFam" id="3.30.390.10:FF:000001">
    <property type="entry name" value="Enolase"/>
    <property type="match status" value="1"/>
</dbReference>
<dbReference type="Gene3D" id="3.20.20.120">
    <property type="entry name" value="Enolase-like C-terminal domain"/>
    <property type="match status" value="1"/>
</dbReference>
<dbReference type="Gene3D" id="3.30.390.10">
    <property type="entry name" value="Enolase-like, N-terminal domain"/>
    <property type="match status" value="1"/>
</dbReference>
<dbReference type="HAMAP" id="MF_00318">
    <property type="entry name" value="Enolase"/>
    <property type="match status" value="1"/>
</dbReference>
<dbReference type="InterPro" id="IPR000941">
    <property type="entry name" value="Enolase"/>
</dbReference>
<dbReference type="InterPro" id="IPR036849">
    <property type="entry name" value="Enolase-like_C_sf"/>
</dbReference>
<dbReference type="InterPro" id="IPR029017">
    <property type="entry name" value="Enolase-like_N"/>
</dbReference>
<dbReference type="InterPro" id="IPR020810">
    <property type="entry name" value="Enolase_C"/>
</dbReference>
<dbReference type="InterPro" id="IPR020809">
    <property type="entry name" value="Enolase_CS"/>
</dbReference>
<dbReference type="InterPro" id="IPR020811">
    <property type="entry name" value="Enolase_N"/>
</dbReference>
<dbReference type="NCBIfam" id="TIGR01060">
    <property type="entry name" value="eno"/>
    <property type="match status" value="1"/>
</dbReference>
<dbReference type="PANTHER" id="PTHR11902">
    <property type="entry name" value="ENOLASE"/>
    <property type="match status" value="1"/>
</dbReference>
<dbReference type="PANTHER" id="PTHR11902:SF1">
    <property type="entry name" value="ENOLASE"/>
    <property type="match status" value="1"/>
</dbReference>
<dbReference type="Pfam" id="PF00113">
    <property type="entry name" value="Enolase_C"/>
    <property type="match status" value="1"/>
</dbReference>
<dbReference type="Pfam" id="PF03952">
    <property type="entry name" value="Enolase_N"/>
    <property type="match status" value="1"/>
</dbReference>
<dbReference type="PIRSF" id="PIRSF001400">
    <property type="entry name" value="Enolase"/>
    <property type="match status" value="1"/>
</dbReference>
<dbReference type="PRINTS" id="PR00148">
    <property type="entry name" value="ENOLASE"/>
</dbReference>
<dbReference type="SFLD" id="SFLDF00002">
    <property type="entry name" value="enolase"/>
    <property type="match status" value="1"/>
</dbReference>
<dbReference type="SFLD" id="SFLDG00178">
    <property type="entry name" value="enolase"/>
    <property type="match status" value="1"/>
</dbReference>
<dbReference type="SMART" id="SM01192">
    <property type="entry name" value="Enolase_C"/>
    <property type="match status" value="1"/>
</dbReference>
<dbReference type="SMART" id="SM01193">
    <property type="entry name" value="Enolase_N"/>
    <property type="match status" value="1"/>
</dbReference>
<dbReference type="SUPFAM" id="SSF51604">
    <property type="entry name" value="Enolase C-terminal domain-like"/>
    <property type="match status" value="1"/>
</dbReference>
<dbReference type="SUPFAM" id="SSF54826">
    <property type="entry name" value="Enolase N-terminal domain-like"/>
    <property type="match status" value="1"/>
</dbReference>
<dbReference type="PROSITE" id="PS00164">
    <property type="entry name" value="ENOLASE"/>
    <property type="match status" value="1"/>
</dbReference>
<feature type="chain" id="PRO_1000132996" description="Enolase">
    <location>
        <begin position="1"/>
        <end position="430"/>
    </location>
</feature>
<feature type="active site" description="Proton donor" evidence="1">
    <location>
        <position position="208"/>
    </location>
</feature>
<feature type="active site" description="Proton acceptor" evidence="1">
    <location>
        <position position="340"/>
    </location>
</feature>
<feature type="binding site" evidence="1">
    <location>
        <position position="166"/>
    </location>
    <ligand>
        <name>(2R)-2-phosphoglycerate</name>
        <dbReference type="ChEBI" id="CHEBI:58289"/>
    </ligand>
</feature>
<feature type="binding site" evidence="1">
    <location>
        <position position="245"/>
    </location>
    <ligand>
        <name>Mg(2+)</name>
        <dbReference type="ChEBI" id="CHEBI:18420"/>
    </ligand>
</feature>
<feature type="binding site" evidence="1">
    <location>
        <position position="288"/>
    </location>
    <ligand>
        <name>Mg(2+)</name>
        <dbReference type="ChEBI" id="CHEBI:18420"/>
    </ligand>
</feature>
<feature type="binding site" evidence="1">
    <location>
        <position position="315"/>
    </location>
    <ligand>
        <name>Mg(2+)</name>
        <dbReference type="ChEBI" id="CHEBI:18420"/>
    </ligand>
</feature>
<feature type="binding site" evidence="1">
    <location>
        <position position="340"/>
    </location>
    <ligand>
        <name>(2R)-2-phosphoglycerate</name>
        <dbReference type="ChEBI" id="CHEBI:58289"/>
    </ligand>
</feature>
<feature type="binding site" evidence="1">
    <location>
        <position position="369"/>
    </location>
    <ligand>
        <name>(2R)-2-phosphoglycerate</name>
        <dbReference type="ChEBI" id="CHEBI:58289"/>
    </ligand>
</feature>
<feature type="binding site" evidence="1">
    <location>
        <position position="370"/>
    </location>
    <ligand>
        <name>(2R)-2-phosphoglycerate</name>
        <dbReference type="ChEBI" id="CHEBI:58289"/>
    </ligand>
</feature>
<feature type="binding site" evidence="1">
    <location>
        <position position="391"/>
    </location>
    <ligand>
        <name>(2R)-2-phosphoglycerate</name>
        <dbReference type="ChEBI" id="CHEBI:58289"/>
    </ligand>
</feature>
<name>ENO_CLOK1</name>
<gene>
    <name evidence="1" type="primary">eno</name>
    <name type="ordered locus">CKR_2985</name>
</gene>
<protein>
    <recommendedName>
        <fullName evidence="1">Enolase</fullName>
        <ecNumber evidence="1">4.2.1.11</ecNumber>
    </recommendedName>
    <alternativeName>
        <fullName evidence="1">2-phospho-D-glycerate hydro-lyase</fullName>
    </alternativeName>
    <alternativeName>
        <fullName evidence="1">2-phosphoglycerate dehydratase</fullName>
    </alternativeName>
</protein>
<comment type="function">
    <text evidence="1">Catalyzes the reversible conversion of 2-phosphoglycerate (2-PG) into phosphoenolpyruvate (PEP). It is essential for the degradation of carbohydrates via glycolysis.</text>
</comment>
<comment type="catalytic activity">
    <reaction evidence="1">
        <text>(2R)-2-phosphoglycerate = phosphoenolpyruvate + H2O</text>
        <dbReference type="Rhea" id="RHEA:10164"/>
        <dbReference type="ChEBI" id="CHEBI:15377"/>
        <dbReference type="ChEBI" id="CHEBI:58289"/>
        <dbReference type="ChEBI" id="CHEBI:58702"/>
        <dbReference type="EC" id="4.2.1.11"/>
    </reaction>
</comment>
<comment type="cofactor">
    <cofactor evidence="1">
        <name>Mg(2+)</name>
        <dbReference type="ChEBI" id="CHEBI:18420"/>
    </cofactor>
    <text evidence="1">Binds a second Mg(2+) ion via substrate during catalysis.</text>
</comment>
<comment type="pathway">
    <text evidence="1">Carbohydrate degradation; glycolysis; pyruvate from D-glyceraldehyde 3-phosphate: step 4/5.</text>
</comment>
<comment type="subcellular location">
    <subcellularLocation>
        <location evidence="1">Cytoplasm</location>
    </subcellularLocation>
    <subcellularLocation>
        <location evidence="1">Secreted</location>
    </subcellularLocation>
    <subcellularLocation>
        <location evidence="1">Cell surface</location>
    </subcellularLocation>
    <text evidence="1">Fractions of enolase are present in both the cytoplasm and on the cell surface.</text>
</comment>
<comment type="similarity">
    <text evidence="1">Belongs to the enolase family.</text>
</comment>
<sequence>MRNYVEIVDVTARQILDSRANPTVEVEVILEDGTEGRAAVPSGASTGAFEAVELRDEDKEKYMGKGVLKAVENVNNYIAEELIGMNVFDQVLIDKTMLELDGTHNKGKLGANATLGVSLACARAAAKYLGLSLYQYIGGVNAKVLPVPMMNIVNGGKHADNNVDLQEFMIMPVGAPSFTEALRMSSEVYHTLKSLLKSKGQDTGVGDEGGFAPNLNSNEEAIQIIVEAVEKAGYVPGKDIFIALDPASTEIYEDGKYNLKSEGKVLSSEEMVDYYVTLVNKYPIISIEDAMAEEDWEGWSILTEKLGDKVQLVGDDLFVTNTERLKKGIDKKVANSILIKLNQIGTLTETLNAIEMAERAGYTAVVSHRSGETEDTTIADLVVAVNAGQIKTGAPARSERVAKYNQLLRIEEELGETAEYRGLNTFYNIK</sequence>
<proteinExistence type="inferred from homology"/>
<organism>
    <name type="scientific">Clostridium kluyveri (strain NBRC 12016)</name>
    <dbReference type="NCBI Taxonomy" id="583346"/>
    <lineage>
        <taxon>Bacteria</taxon>
        <taxon>Bacillati</taxon>
        <taxon>Bacillota</taxon>
        <taxon>Clostridia</taxon>
        <taxon>Eubacteriales</taxon>
        <taxon>Clostridiaceae</taxon>
        <taxon>Clostridium</taxon>
    </lineage>
</organism>
<reference key="1">
    <citation type="submission" date="2005-09" db="EMBL/GenBank/DDBJ databases">
        <title>Complete genome sequence of Clostridium kluyveri and comparative genomics of Clostridia species.</title>
        <authorList>
            <person name="Inui M."/>
            <person name="Nonaka H."/>
            <person name="Shinoda Y."/>
            <person name="Ikenaga Y."/>
            <person name="Abe M."/>
            <person name="Naito K."/>
            <person name="Vertes A.A."/>
            <person name="Yukawa H."/>
        </authorList>
    </citation>
    <scope>NUCLEOTIDE SEQUENCE [LARGE SCALE GENOMIC DNA]</scope>
    <source>
        <strain>NBRC 12016</strain>
    </source>
</reference>
<accession>B9E6B1</accession>
<keyword id="KW-0963">Cytoplasm</keyword>
<keyword id="KW-0324">Glycolysis</keyword>
<keyword id="KW-0456">Lyase</keyword>
<keyword id="KW-0460">Magnesium</keyword>
<keyword id="KW-0479">Metal-binding</keyword>
<keyword id="KW-0964">Secreted</keyword>
<evidence type="ECO:0000255" key="1">
    <source>
        <dbReference type="HAMAP-Rule" id="MF_00318"/>
    </source>
</evidence>